<protein>
    <recommendedName>
        <fullName evidence="1">Fluoride-specific ion channel FluC 2</fullName>
    </recommendedName>
</protein>
<evidence type="ECO:0000255" key="1">
    <source>
        <dbReference type="HAMAP-Rule" id="MF_00454"/>
    </source>
</evidence>
<reference key="1">
    <citation type="journal article" date="2004" name="Nucleic Acids Res.">
        <title>The genome sequence of Bacillus cereus ATCC 10987 reveals metabolic adaptations and a large plasmid related to Bacillus anthracis pXO1.</title>
        <authorList>
            <person name="Rasko D.A."/>
            <person name="Ravel J."/>
            <person name="Oekstad O.A."/>
            <person name="Helgason E."/>
            <person name="Cer R.Z."/>
            <person name="Jiang L."/>
            <person name="Shores K.A."/>
            <person name="Fouts D.E."/>
            <person name="Tourasse N.J."/>
            <person name="Angiuoli S.V."/>
            <person name="Kolonay J.F."/>
            <person name="Nelson W.C."/>
            <person name="Kolstoe A.-B."/>
            <person name="Fraser C.M."/>
            <person name="Read T.D."/>
        </authorList>
    </citation>
    <scope>NUCLEOTIDE SEQUENCE [LARGE SCALE GENOMIC DNA]</scope>
    <source>
        <strain>ATCC 10987 / NRS 248</strain>
    </source>
</reference>
<accession>P61387</accession>
<comment type="function">
    <text evidence="1">Fluoride-specific ion channel. Important for reducing fluoride concentration in the cell, thus reducing its toxicity.</text>
</comment>
<comment type="catalytic activity">
    <reaction evidence="1">
        <text>fluoride(in) = fluoride(out)</text>
        <dbReference type="Rhea" id="RHEA:76159"/>
        <dbReference type="ChEBI" id="CHEBI:17051"/>
    </reaction>
    <physiologicalReaction direction="left-to-right" evidence="1">
        <dbReference type="Rhea" id="RHEA:76160"/>
    </physiologicalReaction>
</comment>
<comment type="activity regulation">
    <text evidence="1">Na(+) is not transported, but it plays an essential structural role and its presence is essential for fluoride channel function.</text>
</comment>
<comment type="subcellular location">
    <subcellularLocation>
        <location evidence="1">Cell membrane</location>
        <topology evidence="1">Multi-pass membrane protein</topology>
    </subcellularLocation>
</comment>
<comment type="similarity">
    <text evidence="1">Belongs to the fluoride channel Fluc/FEX (TC 1.A.43) family.</text>
</comment>
<dbReference type="EMBL" id="AE017194">
    <property type="protein sequence ID" value="AAS44118.1"/>
    <property type="molecule type" value="Genomic_DNA"/>
</dbReference>
<dbReference type="SMR" id="P61387"/>
<dbReference type="KEGG" id="bca:BCE_5217"/>
<dbReference type="HOGENOM" id="CLU_114342_2_3_9"/>
<dbReference type="Proteomes" id="UP000002527">
    <property type="component" value="Chromosome"/>
</dbReference>
<dbReference type="GO" id="GO:0005886">
    <property type="term" value="C:plasma membrane"/>
    <property type="evidence" value="ECO:0007669"/>
    <property type="project" value="UniProtKB-SubCell"/>
</dbReference>
<dbReference type="GO" id="GO:0062054">
    <property type="term" value="F:fluoride channel activity"/>
    <property type="evidence" value="ECO:0007669"/>
    <property type="project" value="UniProtKB-UniRule"/>
</dbReference>
<dbReference type="GO" id="GO:0046872">
    <property type="term" value="F:metal ion binding"/>
    <property type="evidence" value="ECO:0007669"/>
    <property type="project" value="UniProtKB-KW"/>
</dbReference>
<dbReference type="GO" id="GO:0140114">
    <property type="term" value="P:cellular detoxification of fluoride"/>
    <property type="evidence" value="ECO:0007669"/>
    <property type="project" value="UniProtKB-UniRule"/>
</dbReference>
<dbReference type="HAMAP" id="MF_00454">
    <property type="entry name" value="FluC"/>
    <property type="match status" value="1"/>
</dbReference>
<dbReference type="InterPro" id="IPR003691">
    <property type="entry name" value="FluC"/>
</dbReference>
<dbReference type="NCBIfam" id="NF010801">
    <property type="entry name" value="PRK14205.1"/>
    <property type="match status" value="1"/>
</dbReference>
<dbReference type="PANTHER" id="PTHR28259">
    <property type="entry name" value="FLUORIDE EXPORT PROTEIN 1-RELATED"/>
    <property type="match status" value="1"/>
</dbReference>
<dbReference type="PANTHER" id="PTHR28259:SF16">
    <property type="entry name" value="FLUORIDE-SPECIFIC ION CHANNEL FLUC 2"/>
    <property type="match status" value="1"/>
</dbReference>
<dbReference type="Pfam" id="PF02537">
    <property type="entry name" value="CRCB"/>
    <property type="match status" value="1"/>
</dbReference>
<feature type="chain" id="PRO_0000110042" description="Fluoride-specific ion channel FluC 2">
    <location>
        <begin position="1"/>
        <end position="118"/>
    </location>
</feature>
<feature type="transmembrane region" description="Helical" evidence="1">
    <location>
        <begin position="1"/>
        <end position="21"/>
    </location>
</feature>
<feature type="transmembrane region" description="Helical" evidence="1">
    <location>
        <begin position="33"/>
        <end position="53"/>
    </location>
</feature>
<feature type="transmembrane region" description="Helical" evidence="1">
    <location>
        <begin position="55"/>
        <end position="75"/>
    </location>
</feature>
<feature type="transmembrane region" description="Helical" evidence="1">
    <location>
        <begin position="93"/>
        <end position="113"/>
    </location>
</feature>
<feature type="binding site" evidence="1">
    <location>
        <position position="70"/>
    </location>
    <ligand>
        <name>Na(+)</name>
        <dbReference type="ChEBI" id="CHEBI:29101"/>
        <note>structural</note>
    </ligand>
</feature>
<feature type="binding site" evidence="1">
    <location>
        <position position="73"/>
    </location>
    <ligand>
        <name>Na(+)</name>
        <dbReference type="ChEBI" id="CHEBI:29101"/>
        <note>structural</note>
    </ligand>
</feature>
<sequence length="118" mass="12957">MMEALLVATGGFFGAITRFAISNWFKKRTKTSFPIATFLINITGAFLLGYIIGNGVTTGWQLLLGTGFMGAFTTFSTFKLESIQLFNRKNLSILFLYLSATYIIGILFAFLGMQLGGI</sequence>
<keyword id="KW-1003">Cell membrane</keyword>
<keyword id="KW-0407">Ion channel</keyword>
<keyword id="KW-0406">Ion transport</keyword>
<keyword id="KW-0472">Membrane</keyword>
<keyword id="KW-0479">Metal-binding</keyword>
<keyword id="KW-0915">Sodium</keyword>
<keyword id="KW-0812">Transmembrane</keyword>
<keyword id="KW-1133">Transmembrane helix</keyword>
<keyword id="KW-0813">Transport</keyword>
<gene>
    <name evidence="1" type="primary">fluC2</name>
    <name evidence="1" type="synonym">crcB2</name>
    <name type="ordered locus">BCE_5217</name>
</gene>
<proteinExistence type="inferred from homology"/>
<name>FLUC2_BACC1</name>
<organism>
    <name type="scientific">Bacillus cereus (strain ATCC 10987 / NRS 248)</name>
    <dbReference type="NCBI Taxonomy" id="222523"/>
    <lineage>
        <taxon>Bacteria</taxon>
        <taxon>Bacillati</taxon>
        <taxon>Bacillota</taxon>
        <taxon>Bacilli</taxon>
        <taxon>Bacillales</taxon>
        <taxon>Bacillaceae</taxon>
        <taxon>Bacillus</taxon>
        <taxon>Bacillus cereus group</taxon>
    </lineage>
</organism>